<comment type="function">
    <text evidence="11 12">Component of the ubiquinol-cytochrome c oxidoreductase, a multisubunit transmembrane complex that is part of the mitochondrial electron transport chain which drives oxidative phosphorylation (PubMed:34525326, PubMed:36923588). The complex plays an important role in the uptake of multiple carbon sources present in different host niches (PubMed:36923588).</text>
</comment>
<comment type="catalytic activity">
    <reaction evidence="1 4">
        <text>a quinol + 2 Fe(III)-[cytochrome c](out) = a quinone + 2 Fe(II)-[cytochrome c](out) + 2 H(+)(out)</text>
        <dbReference type="Rhea" id="RHEA:11484"/>
        <dbReference type="Rhea" id="RHEA-COMP:10350"/>
        <dbReference type="Rhea" id="RHEA-COMP:14399"/>
        <dbReference type="ChEBI" id="CHEBI:15378"/>
        <dbReference type="ChEBI" id="CHEBI:24646"/>
        <dbReference type="ChEBI" id="CHEBI:29033"/>
        <dbReference type="ChEBI" id="CHEBI:29034"/>
        <dbReference type="ChEBI" id="CHEBI:132124"/>
        <dbReference type="EC" id="7.1.1.8"/>
    </reaction>
</comment>
<comment type="cofactor">
    <cofactor evidence="3">
        <name>[2Fe-2S] cluster</name>
        <dbReference type="ChEBI" id="CHEBI:190135"/>
    </cofactor>
    <text evidence="3">Binds 1 [2Fe-2S] cluster per subunit.</text>
</comment>
<comment type="subunit">
    <text evidence="11">Component of the ubiquinol-cytochrome c oxidoreductase (cytochrome b-c1 complex, complex III, CIII), a multisubunit enzyme composed of 10 subunits. The complex is composed of 3 respiratory subunits cytochrome b (COB), cytochrome c1 (CYT1) and Rieske protein (RIP1), 2 core protein subunits COR1 and QCR2, and 5 low-molecular weight protein subunits QCR6, QCR7, QCR8, QCR9 and QCR10. The complex exists as an obligatory dimer and forms supercomplexes (SCs) in the inner mitochondrial membrane with a monomer or a dimer of cytochrome c oxidase (complex IV, CIV), resulting in 2 different assemblies (supercomplexes III(2)IV and III(2)IV(2)).</text>
</comment>
<comment type="subcellular location">
    <subcellularLocation>
        <location evidence="1">Mitochondrion inner membrane</location>
        <topology evidence="1">Single-pass membrane protein</topology>
    </subcellularLocation>
</comment>
<comment type="induction">
    <text evidence="5 6 7 8 9">Expression is induced in high iron conditions (PubMed:15387822). Expression is repressed in alkaline conditions, by niric oxide and during spider biofilm formation (PubMed:15554973, PubMed:16030247, PubMed:22265407). Expression is also repressed by HAP43 (PubMed:21592964).</text>
</comment>
<comment type="disruption phenotype">
    <text evidence="10 12">Leads to hypersensitivity to azole treatment and sharply curtails fungal growth in the presence of macrophages (PubMed:27524297). Leads to decreased vegetative growth on several carbon sources including maltose, citrate and acetate (PubMed:36923588).</text>
</comment>
<comment type="similarity">
    <text evidence="14">Belongs to the Rieske iron-sulfur protein family.</text>
</comment>
<feature type="transit peptide" description="Mitochondrion" evidence="2">
    <location>
        <begin position="1"/>
        <end position="29"/>
    </location>
</feature>
<feature type="chain" id="PRO_0000459227" description="Cytochrome b-c1 complex subunit Rieske, mitochondrial" evidence="2">
    <location>
        <begin position="30"/>
        <end position="213"/>
    </location>
</feature>
<feature type="topological domain" description="Mitochondrial matrix" evidence="1">
    <location>
        <begin position="30"/>
        <end position="47"/>
    </location>
</feature>
<feature type="transmembrane region" description="Helical" evidence="1">
    <location>
        <begin position="48"/>
        <end position="77"/>
    </location>
</feature>
<feature type="topological domain" description="Mitochondrial intermembrane" evidence="1">
    <location>
        <begin position="78"/>
        <end position="213"/>
    </location>
</feature>
<feature type="domain" description="Rieske" evidence="3">
    <location>
        <begin position="116"/>
        <end position="211"/>
    </location>
</feature>
<feature type="binding site" evidence="3">
    <location>
        <position position="156"/>
    </location>
    <ligand>
        <name>[2Fe-2S] cluster</name>
        <dbReference type="ChEBI" id="CHEBI:190135"/>
    </ligand>
</feature>
<feature type="binding site" evidence="3">
    <location>
        <position position="158"/>
    </location>
    <ligand>
        <name>[2Fe-2S] cluster</name>
        <dbReference type="ChEBI" id="CHEBI:190135"/>
    </ligand>
</feature>
<feature type="binding site" evidence="3">
    <location>
        <position position="175"/>
    </location>
    <ligand>
        <name>[2Fe-2S] cluster</name>
        <dbReference type="ChEBI" id="CHEBI:190135"/>
    </ligand>
</feature>
<feature type="binding site" evidence="3">
    <location>
        <position position="178"/>
    </location>
    <ligand>
        <name>[2Fe-2S] cluster</name>
        <dbReference type="ChEBI" id="CHEBI:190135"/>
    </ligand>
</feature>
<feature type="disulfide bond" evidence="3">
    <location>
        <begin position="161"/>
        <end position="177"/>
    </location>
</feature>
<feature type="turn" evidence="20">
    <location>
        <begin position="38"/>
        <end position="40"/>
    </location>
</feature>
<feature type="helix" evidence="20">
    <location>
        <begin position="46"/>
        <end position="79"/>
    </location>
</feature>
<feature type="helix" evidence="20">
    <location>
        <begin position="83"/>
        <end position="88"/>
    </location>
</feature>
<feature type="strand" evidence="23">
    <location>
        <begin position="93"/>
        <end position="95"/>
    </location>
</feature>
<feature type="strand" evidence="22">
    <location>
        <begin position="96"/>
        <end position="98"/>
    </location>
</feature>
<feature type="strand" evidence="23">
    <location>
        <begin position="100"/>
        <end position="102"/>
    </location>
</feature>
<feature type="strand" evidence="21">
    <location>
        <begin position="106"/>
        <end position="108"/>
    </location>
</feature>
<feature type="strand" evidence="21">
    <location>
        <begin position="111"/>
        <end position="117"/>
    </location>
</feature>
<feature type="helix" evidence="20">
    <location>
        <begin position="120"/>
        <end position="127"/>
    </location>
</feature>
<feature type="strand" evidence="20">
    <location>
        <begin position="131"/>
        <end position="136"/>
    </location>
</feature>
<feature type="helix" evidence="20">
    <location>
        <begin position="140"/>
        <end position="143"/>
    </location>
</feature>
<feature type="strand" evidence="21">
    <location>
        <begin position="145"/>
        <end position="154"/>
    </location>
</feature>
<feature type="strand" evidence="21">
    <location>
        <begin position="156"/>
        <end position="159"/>
    </location>
</feature>
<feature type="strand" evidence="20">
    <location>
        <begin position="164"/>
        <end position="166"/>
    </location>
</feature>
<feature type="turn" evidence="21">
    <location>
        <begin position="168"/>
        <end position="171"/>
    </location>
</feature>
<feature type="strand" evidence="21">
    <location>
        <begin position="172"/>
        <end position="175"/>
    </location>
</feature>
<feature type="turn" evidence="20">
    <location>
        <begin position="176"/>
        <end position="179"/>
    </location>
</feature>
<feature type="strand" evidence="20">
    <location>
        <begin position="180"/>
        <end position="182"/>
    </location>
</feature>
<feature type="strand" evidence="20">
    <location>
        <begin position="188"/>
        <end position="192"/>
    </location>
</feature>
<feature type="strand" evidence="20">
    <location>
        <begin position="203"/>
        <end position="205"/>
    </location>
</feature>
<feature type="strand" evidence="20">
    <location>
        <begin position="208"/>
        <end position="210"/>
    </location>
</feature>
<dbReference type="EC" id="7.1.1.8" evidence="1 4"/>
<dbReference type="EMBL" id="CP017625">
    <property type="protein sequence ID" value="AOW28461.1"/>
    <property type="molecule type" value="Genomic_DNA"/>
</dbReference>
<dbReference type="RefSeq" id="XP_019330863.1">
    <property type="nucleotide sequence ID" value="XM_019475318.1"/>
</dbReference>
<dbReference type="PDB" id="7RJA">
    <property type="method" value="EM"/>
    <property type="resolution" value="3.00 A"/>
    <property type="chains" value="C/M=1-213"/>
</dbReference>
<dbReference type="PDB" id="7RJB">
    <property type="method" value="EM"/>
    <property type="resolution" value="3.20 A"/>
    <property type="chains" value="E/M=1-213"/>
</dbReference>
<dbReference type="PDB" id="7RJC">
    <property type="method" value="EM"/>
    <property type="resolution" value="3.30 A"/>
    <property type="chains" value="E/M=1-213"/>
</dbReference>
<dbReference type="PDB" id="7RJD">
    <property type="method" value="EM"/>
    <property type="resolution" value="3.20 A"/>
    <property type="chains" value="E/M=1-213"/>
</dbReference>
<dbReference type="PDB" id="7RJE">
    <property type="method" value="EM"/>
    <property type="resolution" value="3.30 A"/>
    <property type="chains" value="C/M=1-213"/>
</dbReference>
<dbReference type="PDBsum" id="7RJA"/>
<dbReference type="PDBsum" id="7RJB"/>
<dbReference type="PDBsum" id="7RJC"/>
<dbReference type="PDBsum" id="7RJD"/>
<dbReference type="PDBsum" id="7RJE"/>
<dbReference type="EMDB" id="EMD-24482"/>
<dbReference type="EMDB" id="EMD-24483"/>
<dbReference type="EMDB" id="EMD-24484"/>
<dbReference type="EMDB" id="EMD-24485"/>
<dbReference type="EMDB" id="EMD-24486"/>
<dbReference type="SMR" id="A0A1D8PJX3"/>
<dbReference type="FunCoup" id="A0A1D8PJX3">
    <property type="interactions" value="833"/>
</dbReference>
<dbReference type="STRING" id="237561.A0A1D8PJX3"/>
<dbReference type="EnsemblFungi" id="C3_04430W_A-T">
    <property type="protein sequence ID" value="C3_04430W_A-T-p1"/>
    <property type="gene ID" value="C3_04430W_A"/>
</dbReference>
<dbReference type="GeneID" id="3635204"/>
<dbReference type="KEGG" id="cal:CAALFM_C304430WA"/>
<dbReference type="CGD" id="CAL0000191527">
    <property type="gene designation" value="RIP1"/>
</dbReference>
<dbReference type="VEuPathDB" id="FungiDB:C3_04430W_A"/>
<dbReference type="eggNOG" id="KOG1671">
    <property type="taxonomic scope" value="Eukaryota"/>
</dbReference>
<dbReference type="InParanoid" id="A0A1D8PJX3"/>
<dbReference type="OMA" id="KRTWLIA"/>
<dbReference type="OrthoDB" id="1637982at2759"/>
<dbReference type="Proteomes" id="UP000000559">
    <property type="component" value="Chromosome 3"/>
</dbReference>
<dbReference type="GO" id="GO:0005743">
    <property type="term" value="C:mitochondrial inner membrane"/>
    <property type="evidence" value="ECO:0007669"/>
    <property type="project" value="UniProtKB-SubCell"/>
</dbReference>
<dbReference type="GO" id="GO:0005886">
    <property type="term" value="C:plasma membrane"/>
    <property type="evidence" value="ECO:0000314"/>
    <property type="project" value="CGD"/>
</dbReference>
<dbReference type="GO" id="GO:0045275">
    <property type="term" value="C:respiratory chain complex III"/>
    <property type="evidence" value="ECO:0000318"/>
    <property type="project" value="GO_Central"/>
</dbReference>
<dbReference type="GO" id="GO:0051537">
    <property type="term" value="F:2 iron, 2 sulfur cluster binding"/>
    <property type="evidence" value="ECO:0007669"/>
    <property type="project" value="UniProtKB-KW"/>
</dbReference>
<dbReference type="GO" id="GO:0046872">
    <property type="term" value="F:metal ion binding"/>
    <property type="evidence" value="ECO:0007669"/>
    <property type="project" value="UniProtKB-KW"/>
</dbReference>
<dbReference type="GO" id="GO:0016491">
    <property type="term" value="F:oxidoreductase activity"/>
    <property type="evidence" value="ECO:0000318"/>
    <property type="project" value="GO_Central"/>
</dbReference>
<dbReference type="GO" id="GO:0008121">
    <property type="term" value="F:ubiquinol-cytochrome-c reductase activity"/>
    <property type="evidence" value="ECO:0000303"/>
    <property type="project" value="CGD"/>
</dbReference>
<dbReference type="GO" id="GO:0006122">
    <property type="term" value="P:mitochondrial electron transport, ubiquinol to cytochrome c"/>
    <property type="evidence" value="ECO:0000318"/>
    <property type="project" value="GO_Central"/>
</dbReference>
<dbReference type="CDD" id="cd03470">
    <property type="entry name" value="Rieske_cytochrome_bc1"/>
    <property type="match status" value="1"/>
</dbReference>
<dbReference type="FunFam" id="1.20.5.270:FF:000002">
    <property type="entry name" value="Cytochrome b-c1 complex subunit Rieske, mitochondrial"/>
    <property type="match status" value="1"/>
</dbReference>
<dbReference type="FunFam" id="2.102.10.10:FF:000001">
    <property type="entry name" value="Cytochrome b-c1 complex subunit Rieske, mitochondrial"/>
    <property type="match status" value="1"/>
</dbReference>
<dbReference type="Gene3D" id="2.102.10.10">
    <property type="entry name" value="Rieske [2Fe-2S] iron-sulphur domain"/>
    <property type="match status" value="1"/>
</dbReference>
<dbReference type="Gene3D" id="1.20.5.270">
    <property type="entry name" value="Ubiquinol cytochrome reductase, transmembrane domain"/>
    <property type="match status" value="1"/>
</dbReference>
<dbReference type="InterPro" id="IPR037008">
    <property type="entry name" value="bc1_Rieske_TM_sf"/>
</dbReference>
<dbReference type="InterPro" id="IPR017941">
    <property type="entry name" value="Rieske_2Fe-2S"/>
</dbReference>
<dbReference type="InterPro" id="IPR036922">
    <property type="entry name" value="Rieske_2Fe-2S_sf"/>
</dbReference>
<dbReference type="InterPro" id="IPR014349">
    <property type="entry name" value="Rieske_Fe-S_prot"/>
</dbReference>
<dbReference type="InterPro" id="IPR005805">
    <property type="entry name" value="Rieske_Fe-S_prot_C"/>
</dbReference>
<dbReference type="InterPro" id="IPR004192">
    <property type="entry name" value="Rieske_TM"/>
</dbReference>
<dbReference type="InterPro" id="IPR006317">
    <property type="entry name" value="Ubiquinol_cyt_c_Rdtase_Fe-S-su"/>
</dbReference>
<dbReference type="NCBIfam" id="TIGR01416">
    <property type="entry name" value="Rieske_proteo"/>
    <property type="match status" value="1"/>
</dbReference>
<dbReference type="PANTHER" id="PTHR10134">
    <property type="entry name" value="CYTOCHROME B-C1 COMPLEX SUBUNIT RIESKE, MITOCHONDRIAL"/>
    <property type="match status" value="1"/>
</dbReference>
<dbReference type="Pfam" id="PF00355">
    <property type="entry name" value="Rieske"/>
    <property type="match status" value="1"/>
</dbReference>
<dbReference type="Pfam" id="PF02921">
    <property type="entry name" value="UCR_TM"/>
    <property type="match status" value="1"/>
</dbReference>
<dbReference type="PRINTS" id="PR00162">
    <property type="entry name" value="RIESKE"/>
</dbReference>
<dbReference type="SUPFAM" id="SSF50022">
    <property type="entry name" value="ISP domain"/>
    <property type="match status" value="1"/>
</dbReference>
<dbReference type="SUPFAM" id="SSF81502">
    <property type="entry name" value="ISP transmembrane anchor"/>
    <property type="match status" value="1"/>
</dbReference>
<dbReference type="PROSITE" id="PS51296">
    <property type="entry name" value="RIESKE"/>
    <property type="match status" value="1"/>
</dbReference>
<sequence length="213" mass="23207">MSSLAFRTLRNGLGLKSSVRALSTTTTTLSNYQQPDYSSYLNNKSGQGSRNFTYFMVGSMGLLSAAGAKSTVEAFLSSFAASADVLAMAKVEVKLGAIPEGKNVIIKWQGKPVFIRHRTADEIEEANQVDIKTLRDPQNDADRVKKPEWLIMLGICTHLGCVPIGEAGDFGGWFCPCHGSHYDISGRIRKGPAPLNLEIPEYDFTDDETLLVG</sequence>
<accession>A0A1D8PJX3</accession>
<proteinExistence type="evidence at protein level"/>
<reference key="1">
    <citation type="journal article" date="2004" name="Proc. Natl. Acad. Sci. U.S.A.">
        <title>The diploid genome sequence of Candida albicans.</title>
        <authorList>
            <person name="Jones T."/>
            <person name="Federspiel N.A."/>
            <person name="Chibana H."/>
            <person name="Dungan J."/>
            <person name="Kalman S."/>
            <person name="Magee B.B."/>
            <person name="Newport G."/>
            <person name="Thorstenson Y.R."/>
            <person name="Agabian N."/>
            <person name="Magee P.T."/>
            <person name="Davis R.W."/>
            <person name="Scherer S."/>
        </authorList>
    </citation>
    <scope>NUCLEOTIDE SEQUENCE [LARGE SCALE GENOMIC DNA]</scope>
    <source>
        <strain>SC5314 / ATCC MYA-2876</strain>
    </source>
</reference>
<reference key="2">
    <citation type="journal article" date="2007" name="Genome Biol.">
        <title>Assembly of the Candida albicans genome into sixteen supercontigs aligned on the eight chromosomes.</title>
        <authorList>
            <person name="van het Hoog M."/>
            <person name="Rast T.J."/>
            <person name="Martchenko M."/>
            <person name="Grindle S."/>
            <person name="Dignard D."/>
            <person name="Hogues H."/>
            <person name="Cuomo C."/>
            <person name="Berriman M."/>
            <person name="Scherer S."/>
            <person name="Magee B.B."/>
            <person name="Whiteway M."/>
            <person name="Chibana H."/>
            <person name="Nantel A."/>
            <person name="Magee P.T."/>
        </authorList>
    </citation>
    <scope>GENOME REANNOTATION</scope>
    <source>
        <strain>SC5314 / ATCC MYA-2876</strain>
    </source>
</reference>
<reference key="3">
    <citation type="journal article" date="2013" name="Genome Biol.">
        <title>Assembly of a phased diploid Candida albicans genome facilitates allele-specific measurements and provides a simple model for repeat and indel structure.</title>
        <authorList>
            <person name="Muzzey D."/>
            <person name="Schwartz K."/>
            <person name="Weissman J.S."/>
            <person name="Sherlock G."/>
        </authorList>
    </citation>
    <scope>NUCLEOTIDE SEQUENCE [LARGE SCALE GENOMIC DNA]</scope>
    <scope>GENOME REANNOTATION</scope>
    <source>
        <strain>SC5314 / ATCC MYA-2876</strain>
    </source>
</reference>
<reference key="4">
    <citation type="journal article" date="2004" name="Mol. Microbiol.">
        <title>Regulatory networks affected by iron availability in Candida albicans.</title>
        <authorList>
            <person name="Lan C.Y."/>
            <person name="Rodarte G."/>
            <person name="Murillo L.A."/>
            <person name="Jones T."/>
            <person name="Davis R.W."/>
            <person name="Dungan J."/>
            <person name="Newport G."/>
            <person name="Agabian N."/>
        </authorList>
    </citation>
    <scope>INDUCTION</scope>
</reference>
<reference key="5">
    <citation type="journal article" date="2004" name="Mol. Microbiol.">
        <title>Transcriptional profiling in Candida albicans reveals new adaptive responses to extracellular pH and functions for Rim101p.</title>
        <authorList>
            <person name="Bensen E.S."/>
            <person name="Martin S.J."/>
            <person name="Li M."/>
            <person name="Berman J."/>
            <person name="Davis D.A."/>
        </authorList>
    </citation>
    <scope>INDUCTION</scope>
</reference>
<reference key="6">
    <citation type="journal article" date="2005" name="Mol. Biol. Cell">
        <title>Transcriptional response of Candida albicans to nitric oxide and the role of the YHB1 gene in nitrosative stress and virulence.</title>
        <authorList>
            <person name="Hromatka B.S."/>
            <person name="Noble S.M."/>
            <person name="Johnson A.D."/>
        </authorList>
    </citation>
    <scope>INDUCTION</scope>
</reference>
<reference key="7">
    <citation type="journal article" date="2011" name="J. Biol. Chem.">
        <title>Cap2-HAP complex is a critical transcriptional regulator that has dual but contrasting roles in regulation of iron homeostasis in Candida albicans.</title>
        <authorList>
            <person name="Singh R.P."/>
            <person name="Prasad H.K."/>
            <person name="Sinha I."/>
            <person name="Agarwal N."/>
            <person name="Natarajan K."/>
        </authorList>
    </citation>
    <scope>INDUCTION</scope>
</reference>
<reference key="8">
    <citation type="journal article" date="2012" name="Cell">
        <title>A recently evolved transcriptional network controls biofilm development in Candida albicans.</title>
        <authorList>
            <person name="Nobile C.J."/>
            <person name="Fox E.P."/>
            <person name="Nett J.E."/>
            <person name="Sorrells T.R."/>
            <person name="Mitrovich Q.M."/>
            <person name="Hernday A.D."/>
            <person name="Tuch B.B."/>
            <person name="Andes D.R."/>
            <person name="Johnson A.D."/>
        </authorList>
    </citation>
    <scope>INDUCTION</scope>
</reference>
<reference key="9">
    <citation type="journal article" date="2016" name="Cell Chem. Biol.">
        <title>A Fungal-Selective Cytochrome bc1 Inhibitor Impairs Virulence and Prevents the Evolution of Drug Resistance.</title>
        <authorList>
            <person name="Vincent B.M."/>
            <person name="Langlois J.B."/>
            <person name="Srinivas R."/>
            <person name="Lancaster A.K."/>
            <person name="Scherz-Shouval R."/>
            <person name="Whitesell L."/>
            <person name="Tidor B."/>
            <person name="Buchwald S.L."/>
            <person name="Lindquist S."/>
        </authorList>
    </citation>
    <scope>FUNCTION</scope>
    <scope>DISRUPTION PHENOTYPE</scope>
</reference>
<reference key="10">
    <citation type="journal article" date="2023" name="Front. Cell. Infect. Microbiol.">
        <title>QCR7 affects the virulence of Candida albicans and the uptake of multiple carbon sources present in different host niches.</title>
        <authorList>
            <person name="Zeng L."/>
            <person name="Huang Y."/>
            <person name="Tan J."/>
            <person name="Peng J."/>
            <person name="Hu N."/>
            <person name="Liu Q."/>
            <person name="Cao Y."/>
            <person name="Zhang Y."/>
            <person name="Chen J."/>
            <person name="Huang X."/>
        </authorList>
    </citation>
    <scope>FUNCTION</scope>
    <scope>DISRUPTION PHENOTYPE</scope>
</reference>
<reference evidence="15 16 17 18 19" key="11">
    <citation type="journal article" date="2022" name="Structure">
        <title>Rieske head domain dynamics and indazole-derivative inhibition of Candida albicans complex III.</title>
        <authorList>
            <person name="Di Trani J.M."/>
            <person name="Liu Z."/>
            <person name="Whitesell L."/>
            <person name="Brzezinski P."/>
            <person name="Cowen L.E."/>
            <person name="Rubinstein J.L."/>
        </authorList>
    </citation>
    <scope>STRUCTURE BY ELECTRON MICROSCOPY (3.00 ANGSTROMS) OF THE HOMODIMERIC RESPIRATORY COMPLEX III</scope>
    <scope>FUNCTION</scope>
    <scope>SUBUNIT</scope>
</reference>
<gene>
    <name evidence="13" type="primary">RIP1</name>
    <name type="ordered locus">CAALFM_C304430WA</name>
    <name type="ordered locus">orf19.13314</name>
</gene>
<evidence type="ECO:0000250" key="1">
    <source>
        <dbReference type="UniProtKB" id="P08067"/>
    </source>
</evidence>
<evidence type="ECO:0000255" key="2"/>
<evidence type="ECO:0000255" key="3">
    <source>
        <dbReference type="PROSITE-ProRule" id="PRU00628"/>
    </source>
</evidence>
<evidence type="ECO:0000255" key="4">
    <source>
        <dbReference type="RuleBase" id="RU004494"/>
    </source>
</evidence>
<evidence type="ECO:0000269" key="5">
    <source>
    </source>
</evidence>
<evidence type="ECO:0000269" key="6">
    <source>
    </source>
</evidence>
<evidence type="ECO:0000269" key="7">
    <source>
    </source>
</evidence>
<evidence type="ECO:0000269" key="8">
    <source>
    </source>
</evidence>
<evidence type="ECO:0000269" key="9">
    <source>
    </source>
</evidence>
<evidence type="ECO:0000269" key="10">
    <source>
    </source>
</evidence>
<evidence type="ECO:0000269" key="11">
    <source>
    </source>
</evidence>
<evidence type="ECO:0000269" key="12">
    <source>
    </source>
</evidence>
<evidence type="ECO:0000303" key="13">
    <source>
    </source>
</evidence>
<evidence type="ECO:0000305" key="14"/>
<evidence type="ECO:0007744" key="15">
    <source>
        <dbReference type="PDB" id="7RJA"/>
    </source>
</evidence>
<evidence type="ECO:0007744" key="16">
    <source>
        <dbReference type="PDB" id="7RJB"/>
    </source>
</evidence>
<evidence type="ECO:0007744" key="17">
    <source>
        <dbReference type="PDB" id="7RJC"/>
    </source>
</evidence>
<evidence type="ECO:0007744" key="18">
    <source>
        <dbReference type="PDB" id="7RJD"/>
    </source>
</evidence>
<evidence type="ECO:0007744" key="19">
    <source>
        <dbReference type="PDB" id="7RJE"/>
    </source>
</evidence>
<evidence type="ECO:0007829" key="20">
    <source>
        <dbReference type="PDB" id="7RJA"/>
    </source>
</evidence>
<evidence type="ECO:0007829" key="21">
    <source>
        <dbReference type="PDB" id="7RJB"/>
    </source>
</evidence>
<evidence type="ECO:0007829" key="22">
    <source>
        <dbReference type="PDB" id="7RJC"/>
    </source>
</evidence>
<evidence type="ECO:0007829" key="23">
    <source>
        <dbReference type="PDB" id="7RJD"/>
    </source>
</evidence>
<organism>
    <name type="scientific">Candida albicans (strain SC5314 / ATCC MYA-2876)</name>
    <name type="common">Yeast</name>
    <dbReference type="NCBI Taxonomy" id="237561"/>
    <lineage>
        <taxon>Eukaryota</taxon>
        <taxon>Fungi</taxon>
        <taxon>Dikarya</taxon>
        <taxon>Ascomycota</taxon>
        <taxon>Saccharomycotina</taxon>
        <taxon>Pichiomycetes</taxon>
        <taxon>Debaryomycetaceae</taxon>
        <taxon>Candida/Lodderomyces clade</taxon>
        <taxon>Candida</taxon>
    </lineage>
</organism>
<keyword id="KW-0001">2Fe-2S</keyword>
<keyword id="KW-0002">3D-structure</keyword>
<keyword id="KW-1015">Disulfide bond</keyword>
<keyword id="KW-0249">Electron transport</keyword>
<keyword id="KW-0408">Iron</keyword>
<keyword id="KW-0411">Iron-sulfur</keyword>
<keyword id="KW-0472">Membrane</keyword>
<keyword id="KW-0479">Metal-binding</keyword>
<keyword id="KW-0496">Mitochondrion</keyword>
<keyword id="KW-0999">Mitochondrion inner membrane</keyword>
<keyword id="KW-1185">Reference proteome</keyword>
<keyword id="KW-0679">Respiratory chain</keyword>
<keyword id="KW-0809">Transit peptide</keyword>
<keyword id="KW-1278">Translocase</keyword>
<keyword id="KW-0812">Transmembrane</keyword>
<keyword id="KW-1133">Transmembrane helix</keyword>
<keyword id="KW-0813">Transport</keyword>
<protein>
    <recommendedName>
        <fullName evidence="13">Cytochrome b-c1 complex subunit Rieske, mitochondrial</fullName>
        <ecNumber evidence="1 4">7.1.1.8</ecNumber>
    </recommendedName>
    <alternativeName>
        <fullName evidence="13">Complex III subunit 7</fullName>
    </alternativeName>
</protein>
<name>RIP1_CANAL</name>